<comment type="function">
    <text evidence="1">The RuvA-RuvB-RuvC complex processes Holliday junction (HJ) DNA during genetic recombination and DNA repair, while the RuvA-RuvB complex plays an important role in the rescue of blocked DNA replication forks via replication fork reversal (RFR). RuvA specifically binds to HJ cruciform DNA, conferring on it an open structure. The RuvB hexamer acts as an ATP-dependent pump, pulling dsDNA into and through the RuvAB complex. HJ branch migration allows RuvC to scan DNA until it finds its consensus sequence, where it cleaves and resolves the cruciform DNA.</text>
</comment>
<comment type="subunit">
    <text evidence="1">Homotetramer. Forms an RuvA(8)-RuvB(12)-Holliday junction (HJ) complex. HJ DNA is sandwiched between 2 RuvA tetramers; dsDNA enters through RuvA and exits via RuvB. An RuvB hexamer assembles on each DNA strand where it exits the tetramer. Each RuvB hexamer is contacted by two RuvA subunits (via domain III) on 2 adjacent RuvB subunits; this complex drives branch migration. In the full resolvosome a probable DNA-RuvA(4)-RuvB(12)-RuvC(2) complex forms which resolves the HJ.</text>
</comment>
<comment type="subcellular location">
    <subcellularLocation>
        <location evidence="1">Cytoplasm</location>
    </subcellularLocation>
</comment>
<comment type="domain">
    <text evidence="1">Has three domains with a flexible linker between the domains II and III and assumes an 'L' shape. Domain III is highly mobile and contacts RuvB.</text>
</comment>
<comment type="similarity">
    <text evidence="1">Belongs to the RuvA family.</text>
</comment>
<accession>Q7V7T9</accession>
<dbReference type="EMBL" id="BX548175">
    <property type="protein sequence ID" value="CAE20819.1"/>
    <property type="molecule type" value="Genomic_DNA"/>
</dbReference>
<dbReference type="RefSeq" id="WP_011130023.1">
    <property type="nucleotide sequence ID" value="NC_005071.1"/>
</dbReference>
<dbReference type="SMR" id="Q7V7T9"/>
<dbReference type="KEGG" id="pmt:PMT_0644"/>
<dbReference type="eggNOG" id="COG0632">
    <property type="taxonomic scope" value="Bacteria"/>
</dbReference>
<dbReference type="HOGENOM" id="CLU_087936_0_0_3"/>
<dbReference type="OrthoDB" id="5293449at2"/>
<dbReference type="Proteomes" id="UP000001423">
    <property type="component" value="Chromosome"/>
</dbReference>
<dbReference type="GO" id="GO:0005737">
    <property type="term" value="C:cytoplasm"/>
    <property type="evidence" value="ECO:0007669"/>
    <property type="project" value="UniProtKB-SubCell"/>
</dbReference>
<dbReference type="GO" id="GO:0009379">
    <property type="term" value="C:Holliday junction helicase complex"/>
    <property type="evidence" value="ECO:0007669"/>
    <property type="project" value="InterPro"/>
</dbReference>
<dbReference type="GO" id="GO:0048476">
    <property type="term" value="C:Holliday junction resolvase complex"/>
    <property type="evidence" value="ECO:0007669"/>
    <property type="project" value="UniProtKB-UniRule"/>
</dbReference>
<dbReference type="GO" id="GO:0005524">
    <property type="term" value="F:ATP binding"/>
    <property type="evidence" value="ECO:0007669"/>
    <property type="project" value="InterPro"/>
</dbReference>
<dbReference type="GO" id="GO:0000400">
    <property type="term" value="F:four-way junction DNA binding"/>
    <property type="evidence" value="ECO:0007669"/>
    <property type="project" value="UniProtKB-UniRule"/>
</dbReference>
<dbReference type="GO" id="GO:0009378">
    <property type="term" value="F:four-way junction helicase activity"/>
    <property type="evidence" value="ECO:0007669"/>
    <property type="project" value="InterPro"/>
</dbReference>
<dbReference type="GO" id="GO:0006310">
    <property type="term" value="P:DNA recombination"/>
    <property type="evidence" value="ECO:0007669"/>
    <property type="project" value="UniProtKB-UniRule"/>
</dbReference>
<dbReference type="GO" id="GO:0006281">
    <property type="term" value="P:DNA repair"/>
    <property type="evidence" value="ECO:0007669"/>
    <property type="project" value="UniProtKB-UniRule"/>
</dbReference>
<dbReference type="Gene3D" id="1.10.150.20">
    <property type="entry name" value="5' to 3' exonuclease, C-terminal subdomain"/>
    <property type="match status" value="1"/>
</dbReference>
<dbReference type="Gene3D" id="2.40.50.140">
    <property type="entry name" value="Nucleic acid-binding proteins"/>
    <property type="match status" value="1"/>
</dbReference>
<dbReference type="HAMAP" id="MF_00031">
    <property type="entry name" value="DNA_HJ_migration_RuvA"/>
    <property type="match status" value="1"/>
</dbReference>
<dbReference type="InterPro" id="IPR013849">
    <property type="entry name" value="DNA_helicase_Holl-junc_RuvA_I"/>
</dbReference>
<dbReference type="InterPro" id="IPR003583">
    <property type="entry name" value="Hlx-hairpin-Hlx_DNA-bd_motif"/>
</dbReference>
<dbReference type="InterPro" id="IPR012340">
    <property type="entry name" value="NA-bd_OB-fold"/>
</dbReference>
<dbReference type="InterPro" id="IPR000085">
    <property type="entry name" value="RuvA"/>
</dbReference>
<dbReference type="InterPro" id="IPR010994">
    <property type="entry name" value="RuvA_2-like"/>
</dbReference>
<dbReference type="InterPro" id="IPR011114">
    <property type="entry name" value="RuvA_C"/>
</dbReference>
<dbReference type="NCBIfam" id="TIGR00084">
    <property type="entry name" value="ruvA"/>
    <property type="match status" value="1"/>
</dbReference>
<dbReference type="Pfam" id="PF14520">
    <property type="entry name" value="HHH_5"/>
    <property type="match status" value="1"/>
</dbReference>
<dbReference type="Pfam" id="PF07499">
    <property type="entry name" value="RuvA_C"/>
    <property type="match status" value="1"/>
</dbReference>
<dbReference type="Pfam" id="PF01330">
    <property type="entry name" value="RuvA_N"/>
    <property type="match status" value="1"/>
</dbReference>
<dbReference type="SMART" id="SM00278">
    <property type="entry name" value="HhH1"/>
    <property type="match status" value="2"/>
</dbReference>
<dbReference type="SUPFAM" id="SSF50249">
    <property type="entry name" value="Nucleic acid-binding proteins"/>
    <property type="match status" value="1"/>
</dbReference>
<dbReference type="SUPFAM" id="SSF47781">
    <property type="entry name" value="RuvA domain 2-like"/>
    <property type="match status" value="1"/>
</dbReference>
<organism>
    <name type="scientific">Prochlorococcus marinus (strain MIT 9313)</name>
    <dbReference type="NCBI Taxonomy" id="74547"/>
    <lineage>
        <taxon>Bacteria</taxon>
        <taxon>Bacillati</taxon>
        <taxon>Cyanobacteriota</taxon>
        <taxon>Cyanophyceae</taxon>
        <taxon>Synechococcales</taxon>
        <taxon>Prochlorococcaceae</taxon>
        <taxon>Prochlorococcus</taxon>
    </lineage>
</organism>
<reference key="1">
    <citation type="journal article" date="2003" name="Nature">
        <title>Genome divergence in two Prochlorococcus ecotypes reflects oceanic niche differentiation.</title>
        <authorList>
            <person name="Rocap G."/>
            <person name="Larimer F.W."/>
            <person name="Lamerdin J.E."/>
            <person name="Malfatti S."/>
            <person name="Chain P."/>
            <person name="Ahlgren N.A."/>
            <person name="Arellano A."/>
            <person name="Coleman M."/>
            <person name="Hauser L."/>
            <person name="Hess W.R."/>
            <person name="Johnson Z.I."/>
            <person name="Land M.L."/>
            <person name="Lindell D."/>
            <person name="Post A.F."/>
            <person name="Regala W."/>
            <person name="Shah M."/>
            <person name="Shaw S.L."/>
            <person name="Steglich C."/>
            <person name="Sullivan M.B."/>
            <person name="Ting C.S."/>
            <person name="Tolonen A."/>
            <person name="Webb E.A."/>
            <person name="Zinser E.R."/>
            <person name="Chisholm S.W."/>
        </authorList>
    </citation>
    <scope>NUCLEOTIDE SEQUENCE [LARGE SCALE GENOMIC DNA]</scope>
    <source>
        <strain>MIT 9313</strain>
    </source>
</reference>
<proteinExistence type="inferred from homology"/>
<name>RUVA_PROMM</name>
<protein>
    <recommendedName>
        <fullName evidence="1">Holliday junction branch migration complex subunit RuvA</fullName>
    </recommendedName>
</protein>
<sequence>MIGWLQGQKVEAWQQGTRQGVVLACAGVGYEVQIAPRHLSEMEHGQNTFILWIHQVQRDDGSSLFGFPERRERDMFRTLIGVSGVGPQMALALLEECQTGELVEAIVQGDLRKLCQAQGVGKRTAERLAVELRTKLAEFSCRDPGMSLVDNGVIDSHQLKDSSLHELQITLGGLGYEDLEIRRAIRAVASGAAIGASDMPESVPSIDDTDAWLRASLRWLSQEAA</sequence>
<keyword id="KW-0963">Cytoplasm</keyword>
<keyword id="KW-0227">DNA damage</keyword>
<keyword id="KW-0233">DNA recombination</keyword>
<keyword id="KW-0234">DNA repair</keyword>
<keyword id="KW-0238">DNA-binding</keyword>
<keyword id="KW-1185">Reference proteome</keyword>
<feature type="chain" id="PRO_0000094663" description="Holliday junction branch migration complex subunit RuvA">
    <location>
        <begin position="1"/>
        <end position="225"/>
    </location>
</feature>
<feature type="region of interest" description="Domain I" evidence="1">
    <location>
        <begin position="1"/>
        <end position="68"/>
    </location>
</feature>
<feature type="region of interest" description="Domain II" evidence="1">
    <location>
        <begin position="69"/>
        <end position="147"/>
    </location>
</feature>
<feature type="region of interest" description="Flexible linker" evidence="1">
    <location>
        <begin position="148"/>
        <end position="158"/>
    </location>
</feature>
<feature type="region of interest" description="Domain III" evidence="1">
    <location>
        <begin position="159"/>
        <end position="225"/>
    </location>
</feature>
<evidence type="ECO:0000255" key="1">
    <source>
        <dbReference type="HAMAP-Rule" id="MF_00031"/>
    </source>
</evidence>
<gene>
    <name evidence="1" type="primary">ruvA</name>
    <name type="ordered locus">PMT_0644</name>
</gene>